<reference key="1">
    <citation type="journal article" date="2004" name="Nature">
        <title>Genome sequence of Silicibacter pomeroyi reveals adaptations to the marine environment.</title>
        <authorList>
            <person name="Moran M.A."/>
            <person name="Buchan A."/>
            <person name="Gonzalez J.M."/>
            <person name="Heidelberg J.F."/>
            <person name="Whitman W.B."/>
            <person name="Kiene R.P."/>
            <person name="Henriksen J.R."/>
            <person name="King G.M."/>
            <person name="Belas R."/>
            <person name="Fuqua C."/>
            <person name="Brinkac L.M."/>
            <person name="Lewis M."/>
            <person name="Johri S."/>
            <person name="Weaver B."/>
            <person name="Pai G."/>
            <person name="Eisen J.A."/>
            <person name="Rahe E."/>
            <person name="Sheldon W.M."/>
            <person name="Ye W."/>
            <person name="Miller T.R."/>
            <person name="Carlton J."/>
            <person name="Rasko D.A."/>
            <person name="Paulsen I.T."/>
            <person name="Ren Q."/>
            <person name="Daugherty S.C."/>
            <person name="DeBoy R.T."/>
            <person name="Dodson R.J."/>
            <person name="Durkin A.S."/>
            <person name="Madupu R."/>
            <person name="Nelson W.C."/>
            <person name="Sullivan S.A."/>
            <person name="Rosovitz M.J."/>
            <person name="Haft D.H."/>
            <person name="Selengut J."/>
            <person name="Ward N."/>
        </authorList>
    </citation>
    <scope>NUCLEOTIDE SEQUENCE [LARGE SCALE GENOMIC DNA]</scope>
    <source>
        <strain>ATCC 700808 / DSM 15171 / DSS-3</strain>
    </source>
</reference>
<reference key="2">
    <citation type="journal article" date="2014" name="Stand. Genomic Sci.">
        <title>An updated genome annotation for the model marine bacterium Ruegeria pomeroyi DSS-3.</title>
        <authorList>
            <person name="Rivers A.R."/>
            <person name="Smith C.B."/>
            <person name="Moran M.A."/>
        </authorList>
    </citation>
    <scope>GENOME REANNOTATION</scope>
    <source>
        <strain>ATCC 700808 / DSM 15171 / DSS-3</strain>
    </source>
</reference>
<feature type="chain" id="PRO_0000139165" description="Methionine--tRNA ligase">
    <location>
        <begin position="1"/>
        <end position="572"/>
    </location>
</feature>
<feature type="short sequence motif" description="'HIGH' region">
    <location>
        <begin position="11"/>
        <end position="21"/>
    </location>
</feature>
<feature type="short sequence motif" description="'KMSKS' region">
    <location>
        <begin position="346"/>
        <end position="350"/>
    </location>
</feature>
<feature type="binding site" evidence="1">
    <location>
        <position position="143"/>
    </location>
    <ligand>
        <name>Zn(2+)</name>
        <dbReference type="ChEBI" id="CHEBI:29105"/>
    </ligand>
</feature>
<feature type="binding site" evidence="1">
    <location>
        <position position="146"/>
    </location>
    <ligand>
        <name>Zn(2+)</name>
        <dbReference type="ChEBI" id="CHEBI:29105"/>
    </ligand>
</feature>
<feature type="binding site" evidence="1">
    <location>
        <position position="156"/>
    </location>
    <ligand>
        <name>Zn(2+)</name>
        <dbReference type="ChEBI" id="CHEBI:29105"/>
    </ligand>
</feature>
<feature type="binding site" evidence="1">
    <location>
        <position position="159"/>
    </location>
    <ligand>
        <name>Zn(2+)</name>
        <dbReference type="ChEBI" id="CHEBI:29105"/>
    </ligand>
</feature>
<feature type="binding site" evidence="1">
    <location>
        <position position="349"/>
    </location>
    <ligand>
        <name>ATP</name>
        <dbReference type="ChEBI" id="CHEBI:30616"/>
    </ligand>
</feature>
<name>SYM_RUEPO</name>
<proteinExistence type="inferred from homology"/>
<comment type="function">
    <text evidence="1">Is required not only for elongation of protein synthesis but also for the initiation of all mRNA translation through initiator tRNA(fMet) aminoacylation.</text>
</comment>
<comment type="catalytic activity">
    <reaction evidence="1">
        <text>tRNA(Met) + L-methionine + ATP = L-methionyl-tRNA(Met) + AMP + diphosphate</text>
        <dbReference type="Rhea" id="RHEA:13481"/>
        <dbReference type="Rhea" id="RHEA-COMP:9667"/>
        <dbReference type="Rhea" id="RHEA-COMP:9698"/>
        <dbReference type="ChEBI" id="CHEBI:30616"/>
        <dbReference type="ChEBI" id="CHEBI:33019"/>
        <dbReference type="ChEBI" id="CHEBI:57844"/>
        <dbReference type="ChEBI" id="CHEBI:78442"/>
        <dbReference type="ChEBI" id="CHEBI:78530"/>
        <dbReference type="ChEBI" id="CHEBI:456215"/>
        <dbReference type="EC" id="6.1.1.10"/>
    </reaction>
</comment>
<comment type="cofactor">
    <cofactor evidence="1">
        <name>Zn(2+)</name>
        <dbReference type="ChEBI" id="CHEBI:29105"/>
    </cofactor>
    <text evidence="1">Binds 1 zinc ion per subunit.</text>
</comment>
<comment type="subunit">
    <text evidence="1">Monomer.</text>
</comment>
<comment type="subcellular location">
    <subcellularLocation>
        <location evidence="1">Cytoplasm</location>
    </subcellularLocation>
</comment>
<comment type="similarity">
    <text evidence="1">Belongs to the class-I aminoacyl-tRNA synthetase family. MetG type 1 subfamily.</text>
</comment>
<gene>
    <name evidence="1" type="primary">metG</name>
    <name type="ordered locus">SPO1403</name>
</gene>
<organism>
    <name type="scientific">Ruegeria pomeroyi (strain ATCC 700808 / DSM 15171 / DSS-3)</name>
    <name type="common">Silicibacter pomeroyi</name>
    <dbReference type="NCBI Taxonomy" id="246200"/>
    <lineage>
        <taxon>Bacteria</taxon>
        <taxon>Pseudomonadati</taxon>
        <taxon>Pseudomonadota</taxon>
        <taxon>Alphaproteobacteria</taxon>
        <taxon>Rhodobacterales</taxon>
        <taxon>Roseobacteraceae</taxon>
        <taxon>Ruegeria</taxon>
    </lineage>
</organism>
<sequence>MARILITSAIPYINGIKHLGNLVGSQLPADLYARYQRGRGNEVMFLCATDEHGTPAELAAAKAGKPVAEYCAEMHGVQADIARRFGLSFDHFGRSSSAQNHKLTQHFAGKLAENDLIREVSERQVYSNADGRFLPDRYIEGTCPNCGYDKARGDQCENCTKQLDPTDLIEPRSAISGSTDLEVRETKHLYLRQSALKDQLDAWIDSKADWPVLTTSIAKKWLHDGDGLQDRGITRDLDWGIPVKKGEQDWPGMEGKVFYVWFDAPIEYIACAGEWAEAHGKSDAEWERWWRTDKGADDVRYVQFMGKDNVPFHTLSFPATLIGSGEPWKMVDHLKSFNYLNYDGGQFSTSQGRGVFMDQALEILPADYWRWWLLSHAPENSDSEFTWENFQASVNKDLADVLGNFVSRITKFCRSKFGEEVPEGGAYGPQEEALIAELTTRLRAYEGHMEAMEVRKSAQELRAIWAAGNEYLQSAAPWTLFKTDPVQAAAQVRLGLNLIRLYAVLSAPFIPAASARMLEAMQTSDDNWPVDIATALNALAPGHAFTVPEVLFAKISDEDREGWQQRFAGVRS</sequence>
<dbReference type="EC" id="6.1.1.10" evidence="1"/>
<dbReference type="EMBL" id="CP000031">
    <property type="protein sequence ID" value="AAV94690.1"/>
    <property type="molecule type" value="Genomic_DNA"/>
</dbReference>
<dbReference type="RefSeq" id="WP_011047140.1">
    <property type="nucleotide sequence ID" value="NC_003911.12"/>
</dbReference>
<dbReference type="SMR" id="Q5LTL1"/>
<dbReference type="STRING" id="246200.SPO1403"/>
<dbReference type="PaxDb" id="246200-SPO1403"/>
<dbReference type="KEGG" id="sil:SPO1403"/>
<dbReference type="eggNOG" id="COG0143">
    <property type="taxonomic scope" value="Bacteria"/>
</dbReference>
<dbReference type="HOGENOM" id="CLU_009710_1_2_5"/>
<dbReference type="OrthoDB" id="9810191at2"/>
<dbReference type="Proteomes" id="UP000001023">
    <property type="component" value="Chromosome"/>
</dbReference>
<dbReference type="GO" id="GO:0017101">
    <property type="term" value="C:aminoacyl-tRNA synthetase multienzyme complex"/>
    <property type="evidence" value="ECO:0007669"/>
    <property type="project" value="TreeGrafter"/>
</dbReference>
<dbReference type="GO" id="GO:0005829">
    <property type="term" value="C:cytosol"/>
    <property type="evidence" value="ECO:0007669"/>
    <property type="project" value="TreeGrafter"/>
</dbReference>
<dbReference type="GO" id="GO:0005524">
    <property type="term" value="F:ATP binding"/>
    <property type="evidence" value="ECO:0007669"/>
    <property type="project" value="UniProtKB-UniRule"/>
</dbReference>
<dbReference type="GO" id="GO:0046872">
    <property type="term" value="F:metal ion binding"/>
    <property type="evidence" value="ECO:0007669"/>
    <property type="project" value="UniProtKB-KW"/>
</dbReference>
<dbReference type="GO" id="GO:0004825">
    <property type="term" value="F:methionine-tRNA ligase activity"/>
    <property type="evidence" value="ECO:0007669"/>
    <property type="project" value="UniProtKB-UniRule"/>
</dbReference>
<dbReference type="GO" id="GO:0006431">
    <property type="term" value="P:methionyl-tRNA aminoacylation"/>
    <property type="evidence" value="ECO:0007669"/>
    <property type="project" value="UniProtKB-UniRule"/>
</dbReference>
<dbReference type="CDD" id="cd07957">
    <property type="entry name" value="Anticodon_Ia_Met"/>
    <property type="match status" value="1"/>
</dbReference>
<dbReference type="CDD" id="cd00814">
    <property type="entry name" value="MetRS_core"/>
    <property type="match status" value="1"/>
</dbReference>
<dbReference type="FunFam" id="2.20.28.20:FF:000001">
    <property type="entry name" value="Methionine--tRNA ligase"/>
    <property type="match status" value="1"/>
</dbReference>
<dbReference type="Gene3D" id="3.40.50.620">
    <property type="entry name" value="HUPs"/>
    <property type="match status" value="1"/>
</dbReference>
<dbReference type="Gene3D" id="1.10.730.10">
    <property type="entry name" value="Isoleucyl-tRNA Synthetase, Domain 1"/>
    <property type="match status" value="1"/>
</dbReference>
<dbReference type="Gene3D" id="2.20.28.20">
    <property type="entry name" value="Methionyl-tRNA synthetase, Zn-domain"/>
    <property type="match status" value="1"/>
</dbReference>
<dbReference type="HAMAP" id="MF_00098">
    <property type="entry name" value="Met_tRNA_synth_type1"/>
    <property type="match status" value="1"/>
</dbReference>
<dbReference type="InterPro" id="IPR041872">
    <property type="entry name" value="Anticodon_Met"/>
</dbReference>
<dbReference type="InterPro" id="IPR023458">
    <property type="entry name" value="Met-tRNA_ligase_1"/>
</dbReference>
<dbReference type="InterPro" id="IPR014758">
    <property type="entry name" value="Met-tRNA_synth"/>
</dbReference>
<dbReference type="InterPro" id="IPR015413">
    <property type="entry name" value="Methionyl/Leucyl_tRNA_Synth"/>
</dbReference>
<dbReference type="InterPro" id="IPR033911">
    <property type="entry name" value="MetRS_core"/>
</dbReference>
<dbReference type="InterPro" id="IPR029038">
    <property type="entry name" value="MetRS_Zn"/>
</dbReference>
<dbReference type="InterPro" id="IPR014729">
    <property type="entry name" value="Rossmann-like_a/b/a_fold"/>
</dbReference>
<dbReference type="InterPro" id="IPR009080">
    <property type="entry name" value="tRNAsynth_Ia_anticodon-bd"/>
</dbReference>
<dbReference type="NCBIfam" id="TIGR00398">
    <property type="entry name" value="metG"/>
    <property type="match status" value="1"/>
</dbReference>
<dbReference type="PANTHER" id="PTHR45765">
    <property type="entry name" value="METHIONINE--TRNA LIGASE"/>
    <property type="match status" value="1"/>
</dbReference>
<dbReference type="PANTHER" id="PTHR45765:SF1">
    <property type="entry name" value="METHIONINE--TRNA LIGASE, CYTOPLASMIC"/>
    <property type="match status" value="1"/>
</dbReference>
<dbReference type="Pfam" id="PF19303">
    <property type="entry name" value="Anticodon_3"/>
    <property type="match status" value="1"/>
</dbReference>
<dbReference type="Pfam" id="PF09334">
    <property type="entry name" value="tRNA-synt_1g"/>
    <property type="match status" value="1"/>
</dbReference>
<dbReference type="PRINTS" id="PR01041">
    <property type="entry name" value="TRNASYNTHMET"/>
</dbReference>
<dbReference type="SUPFAM" id="SSF47323">
    <property type="entry name" value="Anticodon-binding domain of a subclass of class I aminoacyl-tRNA synthetases"/>
    <property type="match status" value="1"/>
</dbReference>
<dbReference type="SUPFAM" id="SSF57770">
    <property type="entry name" value="Methionyl-tRNA synthetase (MetRS), Zn-domain"/>
    <property type="match status" value="1"/>
</dbReference>
<dbReference type="SUPFAM" id="SSF52374">
    <property type="entry name" value="Nucleotidylyl transferase"/>
    <property type="match status" value="1"/>
</dbReference>
<keyword id="KW-0030">Aminoacyl-tRNA synthetase</keyword>
<keyword id="KW-0067">ATP-binding</keyword>
<keyword id="KW-0963">Cytoplasm</keyword>
<keyword id="KW-0436">Ligase</keyword>
<keyword id="KW-0479">Metal-binding</keyword>
<keyword id="KW-0547">Nucleotide-binding</keyword>
<keyword id="KW-0648">Protein biosynthesis</keyword>
<keyword id="KW-1185">Reference proteome</keyword>
<keyword id="KW-0862">Zinc</keyword>
<evidence type="ECO:0000255" key="1">
    <source>
        <dbReference type="HAMAP-Rule" id="MF_00098"/>
    </source>
</evidence>
<protein>
    <recommendedName>
        <fullName evidence="1">Methionine--tRNA ligase</fullName>
        <ecNumber evidence="1">6.1.1.10</ecNumber>
    </recommendedName>
    <alternativeName>
        <fullName evidence="1">Methionyl-tRNA synthetase</fullName>
        <shortName evidence="1">MetRS</shortName>
    </alternativeName>
</protein>
<accession>Q5LTL1</accession>